<organism>
    <name type="scientific">Mycoplasmoides pirum</name>
    <name type="common">Mycoplasma pirum</name>
    <dbReference type="NCBI Taxonomy" id="2122"/>
    <lineage>
        <taxon>Bacteria</taxon>
        <taxon>Bacillati</taxon>
        <taxon>Mycoplasmatota</taxon>
        <taxon>Mycoplasmoidales</taxon>
        <taxon>Mycoplasmoidaceae</taxon>
        <taxon>Mycoplasmoides</taxon>
    </lineage>
</organism>
<comment type="function">
    <text evidence="2">Catalyzes the reversible phosphorolytic breakdown of the N-glycosidic bond in the beta-(deoxy)ribonucleoside molecules, with the formation of the corresponding free purine bases and pentose-1-phosphate.</text>
</comment>
<comment type="catalytic activity">
    <reaction evidence="2">
        <text>a purine D-ribonucleoside + phosphate = a purine nucleobase + alpha-D-ribose 1-phosphate</text>
        <dbReference type="Rhea" id="RHEA:19805"/>
        <dbReference type="ChEBI" id="CHEBI:26386"/>
        <dbReference type="ChEBI" id="CHEBI:43474"/>
        <dbReference type="ChEBI" id="CHEBI:57720"/>
        <dbReference type="ChEBI" id="CHEBI:142355"/>
        <dbReference type="EC" id="2.4.2.1"/>
    </reaction>
</comment>
<comment type="catalytic activity">
    <reaction evidence="2">
        <text>a purine 2'-deoxy-D-ribonucleoside + phosphate = a purine nucleobase + 2-deoxy-alpha-D-ribose 1-phosphate</text>
        <dbReference type="Rhea" id="RHEA:36431"/>
        <dbReference type="ChEBI" id="CHEBI:26386"/>
        <dbReference type="ChEBI" id="CHEBI:43474"/>
        <dbReference type="ChEBI" id="CHEBI:57259"/>
        <dbReference type="ChEBI" id="CHEBI:142361"/>
        <dbReference type="EC" id="2.4.2.1"/>
    </reaction>
</comment>
<comment type="subunit">
    <text evidence="2">Homohexamer; trimer of homodimers.</text>
</comment>
<comment type="similarity">
    <text evidence="2 3">Belongs to the PNP/UDP phosphorylase family.</text>
</comment>
<dbReference type="EC" id="2.4.2.1" evidence="2"/>
<dbReference type="EMBL" id="L13289">
    <property type="protein sequence ID" value="AAA25430.1"/>
    <property type="molecule type" value="Genomic_DNA"/>
</dbReference>
<dbReference type="PIR" id="A53312">
    <property type="entry name" value="A53312"/>
</dbReference>
<dbReference type="SMR" id="P47724"/>
<dbReference type="GO" id="GO:0004731">
    <property type="term" value="F:purine-nucleoside phosphorylase activity"/>
    <property type="evidence" value="ECO:0007669"/>
    <property type="project" value="UniProtKB-EC"/>
</dbReference>
<dbReference type="GO" id="GO:0009116">
    <property type="term" value="P:nucleoside metabolic process"/>
    <property type="evidence" value="ECO:0007669"/>
    <property type="project" value="InterPro"/>
</dbReference>
<dbReference type="InterPro" id="IPR035994">
    <property type="entry name" value="Nucleoside_phosphorylase_sf"/>
</dbReference>
<dbReference type="SUPFAM" id="SSF53167">
    <property type="entry name" value="Purine and uridine phosphorylases"/>
    <property type="match status" value="1"/>
</dbReference>
<protein>
    <recommendedName>
        <fullName evidence="2">Purine nucleoside phosphorylase DeoD-type</fullName>
        <shortName evidence="2">PNP</shortName>
        <ecNumber evidence="2">2.4.2.1</ecNumber>
    </recommendedName>
</protein>
<name>DEOD_MYCPI</name>
<keyword id="KW-0328">Glycosyltransferase</keyword>
<keyword id="KW-0808">Transferase</keyword>
<reference key="1">
    <citation type="journal article" date="1993" name="J. Bacteriol.">
        <title>Identification of Mycoplasma pirum genes involved in the salvage pathways for nucleosides.</title>
        <authorList>
            <person name="Tham T.N."/>
            <person name="Ferris S."/>
            <person name="Kovacic R."/>
            <person name="Montagnier L."/>
            <person name="Blanchard A."/>
        </authorList>
    </citation>
    <scope>NUCLEOTIDE SEQUENCE [GENOMIC DNA]</scope>
    <source>
        <strain>BER</strain>
    </source>
</reference>
<evidence type="ECO:0000250" key="1">
    <source>
        <dbReference type="UniProtKB" id="P50389"/>
    </source>
</evidence>
<evidence type="ECO:0000255" key="2">
    <source>
        <dbReference type="HAMAP-Rule" id="MF_01627"/>
    </source>
</evidence>
<evidence type="ECO:0000305" key="3"/>
<sequence length="42" mass="4658">ALTLLTVSDSLITKESLSSLERQTTFNTMVKLALEMACELQK</sequence>
<proteinExistence type="inferred from homology"/>
<gene>
    <name evidence="2" type="primary">deoD</name>
</gene>
<feature type="chain" id="PRO_0000063147" description="Purine nucleoside phosphorylase DeoD-type">
    <location>
        <begin position="1" status="less than"/>
        <end position="42"/>
    </location>
</feature>
<feature type="active site" description="Proton donor" evidence="2">
    <location>
        <position position="9"/>
    </location>
</feature>
<feature type="binding site" evidence="1">
    <location>
        <begin position="8"/>
        <end position="9"/>
    </location>
    <ligand>
        <name>a purine D-ribonucleoside</name>
        <dbReference type="ChEBI" id="CHEBI:142355"/>
    </ligand>
</feature>
<feature type="site" description="Important for catalytic activity" evidence="2">
    <location>
        <position position="22"/>
    </location>
</feature>
<feature type="non-terminal residue">
    <location>
        <position position="1"/>
    </location>
</feature>
<accession>P47724</accession>